<sequence length="250" mass="26849">MSPAPPPSRGRIRPWLVVGDLVVAAMWVCAGALVKLAVYGVLGLGGRPEADAVKVALSLVYMFFFAWLEGFTGGASYNPLTVLAGALASRAGPSLYLFAAFVRMPAQVFGSILGVKLIRAALPKVGKGAPLSVGVHHGALAEGLATFMVVIVSVTLKKKEMKGFFMKTWISSIWKMTFHLLSSDITGGVMNPASAFAWAYARGDHTTFDHLLVYWLAPLQATLLGVWVVTLLTKPKKIEEEADESKTKKE</sequence>
<evidence type="ECO:0000250" key="1"/>
<evidence type="ECO:0000255" key="2"/>
<evidence type="ECO:0000269" key="3">
    <source>
    </source>
</evidence>
<evidence type="ECO:0000305" key="4"/>
<accession>Q10M80</accession>
<accession>A0A0P0VXM0</accession>
<keyword id="KW-0472">Membrane</keyword>
<keyword id="KW-1185">Reference proteome</keyword>
<keyword id="KW-0677">Repeat</keyword>
<keyword id="KW-0812">Transmembrane</keyword>
<keyword id="KW-1133">Transmembrane helix</keyword>
<keyword id="KW-0813">Transport</keyword>
<protein>
    <recommendedName>
        <fullName>Aquaporin SIP2-1</fullName>
    </recommendedName>
    <alternativeName>
        <fullName>OsSIP2;1</fullName>
    </alternativeName>
    <alternativeName>
        <fullName>Small basic intrinsic protein 2-1</fullName>
    </alternativeName>
</protein>
<organism>
    <name type="scientific">Oryza sativa subsp. japonica</name>
    <name type="common">Rice</name>
    <dbReference type="NCBI Taxonomy" id="39947"/>
    <lineage>
        <taxon>Eukaryota</taxon>
        <taxon>Viridiplantae</taxon>
        <taxon>Streptophyta</taxon>
        <taxon>Embryophyta</taxon>
        <taxon>Tracheophyta</taxon>
        <taxon>Spermatophyta</taxon>
        <taxon>Magnoliopsida</taxon>
        <taxon>Liliopsida</taxon>
        <taxon>Poales</taxon>
        <taxon>Poaceae</taxon>
        <taxon>BOP clade</taxon>
        <taxon>Oryzoideae</taxon>
        <taxon>Oryzeae</taxon>
        <taxon>Oryzinae</taxon>
        <taxon>Oryza</taxon>
        <taxon>Oryza sativa</taxon>
    </lineage>
</organism>
<name>SIP21_ORYSJ</name>
<gene>
    <name type="primary">SIP2-1</name>
    <name type="ordered locus">Os03g0320000</name>
    <name type="ordered locus">LOC_Os03g20410</name>
</gene>
<comment type="function">
    <text evidence="1">Aquaporins facilitate the transport of water and small neutral solutes across cell membranes.</text>
</comment>
<comment type="subcellular location">
    <subcellularLocation>
        <location evidence="4">Membrane</location>
        <topology evidence="4">Multi-pass membrane protein</topology>
    </subcellularLocation>
</comment>
<comment type="tissue specificity">
    <text evidence="3">Expressed in leaves and anthers, and at lower levels in roots.</text>
</comment>
<comment type="domain">
    <text>Aquaporins contain two tandem repeats each containing three membrane-spanning domains and a pore-forming loop with the signature motif Asn-Pro-Ala (NPA).</text>
</comment>
<comment type="similarity">
    <text evidence="4">Belongs to the MIP/aquaporin (TC 1.A.8) family. SIP (TC 1.A.8.10) subfamily.</text>
</comment>
<comment type="sequence caution" evidence="4">
    <conflict type="frameshift">
        <sequence resource="EMBL" id="AK071190"/>
    </conflict>
</comment>
<dbReference type="EMBL" id="DP000009">
    <property type="protein sequence ID" value="ABF95655.1"/>
    <property type="molecule type" value="Genomic_DNA"/>
</dbReference>
<dbReference type="EMBL" id="AP008209">
    <property type="protein sequence ID" value="BAF11864.1"/>
    <property type="molecule type" value="Genomic_DNA"/>
</dbReference>
<dbReference type="EMBL" id="AP014959">
    <property type="protein sequence ID" value="BAS83928.1"/>
    <property type="molecule type" value="Genomic_DNA"/>
</dbReference>
<dbReference type="EMBL" id="AK071190">
    <property type="status" value="NOT_ANNOTATED_CDS"/>
    <property type="molecule type" value="mRNA"/>
</dbReference>
<dbReference type="SMR" id="Q10M80"/>
<dbReference type="FunCoup" id="Q10M80">
    <property type="interactions" value="565"/>
</dbReference>
<dbReference type="STRING" id="39947.Q10M80"/>
<dbReference type="TCDB" id="1.A.8.10.12">
    <property type="family name" value="the major intrinsic protein (mip) family"/>
</dbReference>
<dbReference type="PaxDb" id="39947-Q10M80"/>
<dbReference type="EnsemblPlants" id="Os03t0320000-01">
    <property type="protein sequence ID" value="Os03t0320000-01"/>
    <property type="gene ID" value="Os03g0320000"/>
</dbReference>
<dbReference type="Gramene" id="Os03t0320000-01">
    <property type="protein sequence ID" value="Os03t0320000-01"/>
    <property type="gene ID" value="Os03g0320000"/>
</dbReference>
<dbReference type="KEGG" id="dosa:Os03g0320000"/>
<dbReference type="eggNOG" id="KOG0223">
    <property type="taxonomic scope" value="Eukaryota"/>
</dbReference>
<dbReference type="HOGENOM" id="CLU_100006_0_0_1"/>
<dbReference type="InParanoid" id="Q10M80"/>
<dbReference type="OMA" id="YMFIFAW"/>
<dbReference type="OrthoDB" id="1580043at2759"/>
<dbReference type="Proteomes" id="UP000000763">
    <property type="component" value="Chromosome 3"/>
</dbReference>
<dbReference type="Proteomes" id="UP000059680">
    <property type="component" value="Chromosome 3"/>
</dbReference>
<dbReference type="GO" id="GO:0016020">
    <property type="term" value="C:membrane"/>
    <property type="evidence" value="ECO:0007669"/>
    <property type="project" value="UniProtKB-SubCell"/>
</dbReference>
<dbReference type="GO" id="GO:0015267">
    <property type="term" value="F:channel activity"/>
    <property type="evidence" value="ECO:0007669"/>
    <property type="project" value="InterPro"/>
</dbReference>
<dbReference type="Gene3D" id="1.20.1080.10">
    <property type="entry name" value="Glycerol uptake facilitator protein"/>
    <property type="match status" value="1"/>
</dbReference>
<dbReference type="InterPro" id="IPR023271">
    <property type="entry name" value="Aquaporin-like"/>
</dbReference>
<dbReference type="InterPro" id="IPR000425">
    <property type="entry name" value="MIP"/>
</dbReference>
<dbReference type="InterPro" id="IPR044226">
    <property type="entry name" value="SIP2-1-like"/>
</dbReference>
<dbReference type="PANTHER" id="PTHR47720">
    <property type="entry name" value="AQUAPORIN SIP2-1-RELATED"/>
    <property type="match status" value="1"/>
</dbReference>
<dbReference type="PANTHER" id="PTHR47720:SF1">
    <property type="entry name" value="AQUAPORIN SIP2-1-RELATED"/>
    <property type="match status" value="1"/>
</dbReference>
<dbReference type="Pfam" id="PF00230">
    <property type="entry name" value="MIP"/>
    <property type="match status" value="1"/>
</dbReference>
<dbReference type="SUPFAM" id="SSF81338">
    <property type="entry name" value="Aquaporin-like"/>
    <property type="match status" value="1"/>
</dbReference>
<proteinExistence type="evidence at transcript level"/>
<feature type="chain" id="PRO_0000286043" description="Aquaporin SIP2-1">
    <location>
        <begin position="1"/>
        <end position="250"/>
    </location>
</feature>
<feature type="transmembrane region" description="Helical; Name=1" evidence="2">
    <location>
        <begin position="14"/>
        <end position="34"/>
    </location>
</feature>
<feature type="transmembrane region" description="Helical; Name=2" evidence="2">
    <location>
        <begin position="55"/>
        <end position="75"/>
    </location>
</feature>
<feature type="transmembrane region" description="Helical; Name=3" evidence="2">
    <location>
        <begin position="95"/>
        <end position="115"/>
    </location>
</feature>
<feature type="transmembrane region" description="Helical; Name=4" evidence="2">
    <location>
        <begin position="132"/>
        <end position="152"/>
    </location>
</feature>
<feature type="transmembrane region" description="Helical; Name=5" evidence="2">
    <location>
        <begin position="178"/>
        <end position="200"/>
    </location>
</feature>
<feature type="transmembrane region" description="Helical; Name=6" evidence="2">
    <location>
        <begin position="211"/>
        <end position="231"/>
    </location>
</feature>
<feature type="short sequence motif" description="NPA 1">
    <location>
        <begin position="78"/>
        <end position="80"/>
    </location>
</feature>
<feature type="short sequence motif" description="NPA 2">
    <location>
        <begin position="191"/>
        <end position="193"/>
    </location>
</feature>
<reference key="1">
    <citation type="journal article" date="2005" name="Genome Res.">
        <title>Sequence, annotation, and analysis of synteny between rice chromosome 3 and diverged grass species.</title>
        <authorList>
            <consortium name="The rice chromosome 3 sequencing consortium"/>
            <person name="Buell C.R."/>
            <person name="Yuan Q."/>
            <person name="Ouyang S."/>
            <person name="Liu J."/>
            <person name="Zhu W."/>
            <person name="Wang A."/>
            <person name="Maiti R."/>
            <person name="Haas B."/>
            <person name="Wortman J."/>
            <person name="Pertea M."/>
            <person name="Jones K.M."/>
            <person name="Kim M."/>
            <person name="Overton L."/>
            <person name="Tsitrin T."/>
            <person name="Fadrosh D."/>
            <person name="Bera J."/>
            <person name="Weaver B."/>
            <person name="Jin S."/>
            <person name="Johri S."/>
            <person name="Reardon M."/>
            <person name="Webb K."/>
            <person name="Hill J."/>
            <person name="Moffat K."/>
            <person name="Tallon L."/>
            <person name="Van Aken S."/>
            <person name="Lewis M."/>
            <person name="Utterback T."/>
            <person name="Feldblyum T."/>
            <person name="Zismann V."/>
            <person name="Iobst S."/>
            <person name="Hsiao J."/>
            <person name="de Vazeille A.R."/>
            <person name="Salzberg S.L."/>
            <person name="White O."/>
            <person name="Fraser C.M."/>
            <person name="Yu Y."/>
            <person name="Kim H."/>
            <person name="Rambo T."/>
            <person name="Currie J."/>
            <person name="Collura K."/>
            <person name="Kernodle-Thompson S."/>
            <person name="Wei F."/>
            <person name="Kudrna K."/>
            <person name="Ammiraju J.S.S."/>
            <person name="Luo M."/>
            <person name="Goicoechea J.L."/>
            <person name="Wing R.A."/>
            <person name="Henry D."/>
            <person name="Oates R."/>
            <person name="Palmer M."/>
            <person name="Pries G."/>
            <person name="Saski C."/>
            <person name="Simmons J."/>
            <person name="Soderlund C."/>
            <person name="Nelson W."/>
            <person name="de la Bastide M."/>
            <person name="Spiegel L."/>
            <person name="Nascimento L."/>
            <person name="Huang E."/>
            <person name="Preston R."/>
            <person name="Zutavern T."/>
            <person name="Palmer L."/>
            <person name="O'Shaughnessy A."/>
            <person name="Dike S."/>
            <person name="McCombie W.R."/>
            <person name="Minx P."/>
            <person name="Cordum H."/>
            <person name="Wilson R."/>
            <person name="Jin W."/>
            <person name="Lee H.R."/>
            <person name="Jiang J."/>
            <person name="Jackson S."/>
        </authorList>
    </citation>
    <scope>NUCLEOTIDE SEQUENCE [LARGE SCALE GENOMIC DNA]</scope>
    <source>
        <strain>cv. Nipponbare</strain>
    </source>
</reference>
<reference key="2">
    <citation type="journal article" date="2005" name="Nature">
        <title>The map-based sequence of the rice genome.</title>
        <authorList>
            <consortium name="International rice genome sequencing project (IRGSP)"/>
        </authorList>
    </citation>
    <scope>NUCLEOTIDE SEQUENCE [LARGE SCALE GENOMIC DNA]</scope>
    <source>
        <strain>cv. Nipponbare</strain>
    </source>
</reference>
<reference key="3">
    <citation type="journal article" date="2008" name="Nucleic Acids Res.">
        <title>The rice annotation project database (RAP-DB): 2008 update.</title>
        <authorList>
            <consortium name="The rice annotation project (RAP)"/>
        </authorList>
    </citation>
    <scope>GENOME REANNOTATION</scope>
    <source>
        <strain>cv. Nipponbare</strain>
    </source>
</reference>
<reference key="4">
    <citation type="journal article" date="2013" name="Rice">
        <title>Improvement of the Oryza sativa Nipponbare reference genome using next generation sequence and optical map data.</title>
        <authorList>
            <person name="Kawahara Y."/>
            <person name="de la Bastide M."/>
            <person name="Hamilton J.P."/>
            <person name="Kanamori H."/>
            <person name="McCombie W.R."/>
            <person name="Ouyang S."/>
            <person name="Schwartz D.C."/>
            <person name="Tanaka T."/>
            <person name="Wu J."/>
            <person name="Zhou S."/>
            <person name="Childs K.L."/>
            <person name="Davidson R.M."/>
            <person name="Lin H."/>
            <person name="Quesada-Ocampo L."/>
            <person name="Vaillancourt B."/>
            <person name="Sakai H."/>
            <person name="Lee S.S."/>
            <person name="Kim J."/>
            <person name="Numa H."/>
            <person name="Itoh T."/>
            <person name="Buell C.R."/>
            <person name="Matsumoto T."/>
        </authorList>
    </citation>
    <scope>GENOME REANNOTATION</scope>
    <source>
        <strain>cv. Nipponbare</strain>
    </source>
</reference>
<reference key="5">
    <citation type="journal article" date="2003" name="Science">
        <title>Collection, mapping, and annotation of over 28,000 cDNA clones from japonica rice.</title>
        <authorList>
            <consortium name="The rice full-length cDNA consortium"/>
        </authorList>
    </citation>
    <scope>NUCLEOTIDE SEQUENCE [LARGE SCALE MRNA]</scope>
    <source>
        <strain>cv. Nipponbare</strain>
    </source>
</reference>
<reference key="6">
    <citation type="journal article" date="2005" name="Plant Cell Physiol.">
        <title>Identification of 33 rice aquaporin genes and analysis of their expression and function.</title>
        <authorList>
            <person name="Sakurai J."/>
            <person name="Ishikawa F."/>
            <person name="Yamaguchi T."/>
            <person name="Uemura M."/>
            <person name="Maeshima M."/>
        </authorList>
    </citation>
    <scope>NOMENCLATURE</scope>
    <scope>TISSUE SPECIFICITY</scope>
</reference>